<accession>Q5UQQ3</accession>
<protein>
    <recommendedName>
        <fullName>Uncharacterized protein R860</fullName>
    </recommendedName>
</protein>
<gene>
    <name type="ordered locus">MIMI_R860</name>
</gene>
<sequence length="106" mass="12142">MRRDIVVNQQFTSKVKSIGINSHGAILSSANEPKKLPNKKLVSTKSHTQVNREKSKNKDTYEDYSDSNNSHITYGLPNYFVKKNRLSVDNDMVESNNNEFDYISDD</sequence>
<keyword id="KW-1185">Reference proteome</keyword>
<evidence type="ECO:0000256" key="1">
    <source>
        <dbReference type="SAM" id="MobiDB-lite"/>
    </source>
</evidence>
<proteinExistence type="predicted"/>
<dbReference type="EMBL" id="AY653733">
    <property type="protein sequence ID" value="AAV51118.1"/>
    <property type="molecule type" value="Genomic_DNA"/>
</dbReference>
<dbReference type="KEGG" id="vg:9925521"/>
<dbReference type="Proteomes" id="UP000001134">
    <property type="component" value="Genome"/>
</dbReference>
<organismHost>
    <name type="scientific">Acanthamoeba polyphaga</name>
    <name type="common">Amoeba</name>
    <dbReference type="NCBI Taxonomy" id="5757"/>
</organismHost>
<name>YR860_MIMIV</name>
<organism>
    <name type="scientific">Acanthamoeba polyphaga mimivirus</name>
    <name type="common">APMV</name>
    <dbReference type="NCBI Taxonomy" id="212035"/>
    <lineage>
        <taxon>Viruses</taxon>
        <taxon>Varidnaviria</taxon>
        <taxon>Bamfordvirae</taxon>
        <taxon>Nucleocytoviricota</taxon>
        <taxon>Megaviricetes</taxon>
        <taxon>Imitervirales</taxon>
        <taxon>Mimiviridae</taxon>
        <taxon>Megamimivirinae</taxon>
        <taxon>Mimivirus</taxon>
        <taxon>Mimivirus bradfordmassiliense</taxon>
    </lineage>
</organism>
<feature type="chain" id="PRO_0000071377" description="Uncharacterized protein R860">
    <location>
        <begin position="1"/>
        <end position="106"/>
    </location>
</feature>
<feature type="region of interest" description="Disordered" evidence="1">
    <location>
        <begin position="28"/>
        <end position="68"/>
    </location>
</feature>
<feature type="compositionally biased region" description="Basic and acidic residues" evidence="1">
    <location>
        <begin position="50"/>
        <end position="61"/>
    </location>
</feature>
<reference key="1">
    <citation type="journal article" date="2004" name="Science">
        <title>The 1.2-megabase genome sequence of Mimivirus.</title>
        <authorList>
            <person name="Raoult D."/>
            <person name="Audic S."/>
            <person name="Robert C."/>
            <person name="Abergel C."/>
            <person name="Renesto P."/>
            <person name="Ogata H."/>
            <person name="La Scola B."/>
            <person name="Susan M."/>
            <person name="Claverie J.-M."/>
        </authorList>
    </citation>
    <scope>NUCLEOTIDE SEQUENCE [LARGE SCALE GENOMIC DNA]</scope>
    <source>
        <strain>Rowbotham-Bradford</strain>
    </source>
</reference>